<gene>
    <name evidence="1" type="primary">rsmI</name>
    <name type="ordered locus">SpyM3_0292</name>
</gene>
<feature type="chain" id="PRO_0000211955" description="Ribosomal RNA small subunit methyltransferase I">
    <location>
        <begin position="1"/>
        <end position="287"/>
    </location>
</feature>
<organism>
    <name type="scientific">Streptococcus pyogenes serotype M3 (strain ATCC BAA-595 / MGAS315)</name>
    <dbReference type="NCBI Taxonomy" id="198466"/>
    <lineage>
        <taxon>Bacteria</taxon>
        <taxon>Bacillati</taxon>
        <taxon>Bacillota</taxon>
        <taxon>Bacilli</taxon>
        <taxon>Lactobacillales</taxon>
        <taxon>Streptococcaceae</taxon>
        <taxon>Streptococcus</taxon>
    </lineage>
</organism>
<sequence>MQVQKSFKDKKTSGTLYLVPTPIGNLQDMTFRAVATLKEVDFICAEDTRNTGLLLKHFDIATKQISFHEHNAYEKIPDLIDLLISGRSLAQVSDAGMPSISDPGHDLVKAAIDSDITVVALPGASAGITALIASGLAPQPHVFYGFLPRKAGQQKAFFEDKHHYPETQMFYESPYRIKDTLTNMLACYGDRQVVLVRELTKLFEEYQRGSISEILSYLEETSLKGECLLIVAGAQVDSEVELTADVDLVSLVQKEIQAGAKPNQAIKTIAKAYQVNRQELYQQFHDL</sequence>
<proteinExistence type="inferred from homology"/>
<reference key="1">
    <citation type="journal article" date="2002" name="Proc. Natl. Acad. Sci. U.S.A.">
        <title>Genome sequence of a serotype M3 strain of group A Streptococcus: phage-encoded toxins, the high-virulence phenotype, and clone emergence.</title>
        <authorList>
            <person name="Beres S.B."/>
            <person name="Sylva G.L."/>
            <person name="Barbian K.D."/>
            <person name="Lei B."/>
            <person name="Hoff J.S."/>
            <person name="Mammarella N.D."/>
            <person name="Liu M.-Y."/>
            <person name="Smoot J.C."/>
            <person name="Porcella S.F."/>
            <person name="Parkins L.D."/>
            <person name="Campbell D.S."/>
            <person name="Smith T.M."/>
            <person name="McCormick J.K."/>
            <person name="Leung D.Y.M."/>
            <person name="Schlievert P.M."/>
            <person name="Musser J.M."/>
        </authorList>
    </citation>
    <scope>NUCLEOTIDE SEQUENCE [LARGE SCALE GENOMIC DNA]</scope>
    <source>
        <strain>ATCC BAA-595 / MGAS315</strain>
    </source>
</reference>
<comment type="function">
    <text evidence="1">Catalyzes the 2'-O-methylation of the ribose of cytidine 1402 (C1402) in 16S rRNA.</text>
</comment>
<comment type="catalytic activity">
    <reaction evidence="1">
        <text>cytidine(1402) in 16S rRNA + S-adenosyl-L-methionine = 2'-O-methylcytidine(1402) in 16S rRNA + S-adenosyl-L-homocysteine + H(+)</text>
        <dbReference type="Rhea" id="RHEA:42924"/>
        <dbReference type="Rhea" id="RHEA-COMP:10285"/>
        <dbReference type="Rhea" id="RHEA-COMP:10286"/>
        <dbReference type="ChEBI" id="CHEBI:15378"/>
        <dbReference type="ChEBI" id="CHEBI:57856"/>
        <dbReference type="ChEBI" id="CHEBI:59789"/>
        <dbReference type="ChEBI" id="CHEBI:74495"/>
        <dbReference type="ChEBI" id="CHEBI:82748"/>
        <dbReference type="EC" id="2.1.1.198"/>
    </reaction>
</comment>
<comment type="subcellular location">
    <subcellularLocation>
        <location evidence="1">Cytoplasm</location>
    </subcellularLocation>
</comment>
<comment type="similarity">
    <text evidence="1">Belongs to the methyltransferase superfamily. RsmI family.</text>
</comment>
<dbReference type="EC" id="2.1.1.198" evidence="1"/>
<dbReference type="EMBL" id="AE014074">
    <property type="protein sequence ID" value="AAM78899.1"/>
    <property type="molecule type" value="Genomic_DNA"/>
</dbReference>
<dbReference type="RefSeq" id="WP_011054222.1">
    <property type="nucleotide sequence ID" value="NC_004070.1"/>
</dbReference>
<dbReference type="SMR" id="P0DF46"/>
<dbReference type="KEGG" id="spg:SpyM3_0292"/>
<dbReference type="HOGENOM" id="CLU_044779_1_0_9"/>
<dbReference type="Proteomes" id="UP000000564">
    <property type="component" value="Chromosome"/>
</dbReference>
<dbReference type="GO" id="GO:0005737">
    <property type="term" value="C:cytoplasm"/>
    <property type="evidence" value="ECO:0007669"/>
    <property type="project" value="UniProtKB-SubCell"/>
</dbReference>
<dbReference type="GO" id="GO:0070677">
    <property type="term" value="F:rRNA (cytosine-2'-O-)-methyltransferase activity"/>
    <property type="evidence" value="ECO:0007669"/>
    <property type="project" value="UniProtKB-UniRule"/>
</dbReference>
<dbReference type="CDD" id="cd11648">
    <property type="entry name" value="RsmI"/>
    <property type="match status" value="1"/>
</dbReference>
<dbReference type="FunFam" id="3.30.950.10:FF:000002">
    <property type="entry name" value="Ribosomal RNA small subunit methyltransferase I"/>
    <property type="match status" value="1"/>
</dbReference>
<dbReference type="FunFam" id="3.40.1010.10:FF:000002">
    <property type="entry name" value="Ribosomal RNA small subunit methyltransferase I"/>
    <property type="match status" value="1"/>
</dbReference>
<dbReference type="Gene3D" id="3.40.1010.10">
    <property type="entry name" value="Cobalt-precorrin-4 Transmethylase, Domain 1"/>
    <property type="match status" value="1"/>
</dbReference>
<dbReference type="Gene3D" id="3.30.950.10">
    <property type="entry name" value="Methyltransferase, Cobalt-precorrin-4 Transmethylase, Domain 2"/>
    <property type="match status" value="1"/>
</dbReference>
<dbReference type="HAMAP" id="MF_01877">
    <property type="entry name" value="16SrRNA_methyltr_I"/>
    <property type="match status" value="1"/>
</dbReference>
<dbReference type="InterPro" id="IPR000878">
    <property type="entry name" value="4pyrrol_Mease"/>
</dbReference>
<dbReference type="InterPro" id="IPR035996">
    <property type="entry name" value="4pyrrol_Methylase_sf"/>
</dbReference>
<dbReference type="InterPro" id="IPR014777">
    <property type="entry name" value="4pyrrole_Mease_sub1"/>
</dbReference>
<dbReference type="InterPro" id="IPR014776">
    <property type="entry name" value="4pyrrole_Mease_sub2"/>
</dbReference>
<dbReference type="InterPro" id="IPR008189">
    <property type="entry name" value="rRNA_ssu_MeTfrase_I"/>
</dbReference>
<dbReference type="InterPro" id="IPR018063">
    <property type="entry name" value="SAM_MeTrfase_RsmI_CS"/>
</dbReference>
<dbReference type="NCBIfam" id="TIGR00096">
    <property type="entry name" value="16S rRNA (cytidine(1402)-2'-O)-methyltransferase"/>
    <property type="match status" value="1"/>
</dbReference>
<dbReference type="PANTHER" id="PTHR46111">
    <property type="entry name" value="RIBOSOMAL RNA SMALL SUBUNIT METHYLTRANSFERASE I"/>
    <property type="match status" value="1"/>
</dbReference>
<dbReference type="PANTHER" id="PTHR46111:SF1">
    <property type="entry name" value="RIBOSOMAL RNA SMALL SUBUNIT METHYLTRANSFERASE I"/>
    <property type="match status" value="1"/>
</dbReference>
<dbReference type="Pfam" id="PF00590">
    <property type="entry name" value="TP_methylase"/>
    <property type="match status" value="1"/>
</dbReference>
<dbReference type="PIRSF" id="PIRSF005917">
    <property type="entry name" value="MTase_YraL"/>
    <property type="match status" value="1"/>
</dbReference>
<dbReference type="SUPFAM" id="SSF53790">
    <property type="entry name" value="Tetrapyrrole methylase"/>
    <property type="match status" value="1"/>
</dbReference>
<dbReference type="PROSITE" id="PS01296">
    <property type="entry name" value="RSMI"/>
    <property type="match status" value="1"/>
</dbReference>
<evidence type="ECO:0000255" key="1">
    <source>
        <dbReference type="HAMAP-Rule" id="MF_01877"/>
    </source>
</evidence>
<name>RSMI_STRP3</name>
<accession>P0DF46</accession>
<accession>Q79WD8</accession>
<accession>Q8K8H1</accession>
<keyword id="KW-0963">Cytoplasm</keyword>
<keyword id="KW-0489">Methyltransferase</keyword>
<keyword id="KW-0698">rRNA processing</keyword>
<keyword id="KW-0949">S-adenosyl-L-methionine</keyword>
<keyword id="KW-0808">Transferase</keyword>
<protein>
    <recommendedName>
        <fullName evidence="1">Ribosomal RNA small subunit methyltransferase I</fullName>
        <ecNumber evidence="1">2.1.1.198</ecNumber>
    </recommendedName>
    <alternativeName>
        <fullName evidence="1">16S rRNA 2'-O-ribose C1402 methyltransferase</fullName>
    </alternativeName>
    <alternativeName>
        <fullName evidence="1">rRNA (cytidine-2'-O-)-methyltransferase RsmI</fullName>
    </alternativeName>
</protein>